<accession>Q9NX57</accession>
<accession>Q5T9X5</accession>
<accession>Q9NX49</accession>
<dbReference type="EC" id="3.6.5.2" evidence="3"/>
<dbReference type="EMBL" id="AJ272065">
    <property type="protein sequence ID" value="CAC81247.1"/>
    <property type="molecule type" value="mRNA"/>
</dbReference>
<dbReference type="EMBL" id="AK000436">
    <property type="protein sequence ID" value="BAA91163.1"/>
    <property type="molecule type" value="mRNA"/>
</dbReference>
<dbReference type="EMBL" id="AK000446">
    <property type="protein sequence ID" value="BAA91171.1"/>
    <property type="molecule type" value="mRNA"/>
</dbReference>
<dbReference type="EMBL" id="AL139385">
    <property type="status" value="NOT_ANNOTATED_CDS"/>
    <property type="molecule type" value="Genomic_DNA"/>
</dbReference>
<dbReference type="EMBL" id="CH471085">
    <property type="protein sequence ID" value="EAX09113.1"/>
    <property type="molecule type" value="Genomic_DNA"/>
</dbReference>
<dbReference type="EMBL" id="BC026025">
    <property type="protein sequence ID" value="AAH26025.1"/>
    <property type="molecule type" value="mRNA"/>
</dbReference>
<dbReference type="CCDS" id="CCDS9512.1"/>
<dbReference type="RefSeq" id="NP_060287.1">
    <property type="nucleotide sequence ID" value="NM_017817.3"/>
</dbReference>
<dbReference type="SMR" id="Q9NX57"/>
<dbReference type="BioGRID" id="120781">
    <property type="interactions" value="19"/>
</dbReference>
<dbReference type="FunCoup" id="Q9NX57">
    <property type="interactions" value="1166"/>
</dbReference>
<dbReference type="IntAct" id="Q9NX57">
    <property type="interactions" value="16"/>
</dbReference>
<dbReference type="STRING" id="9606.ENSP00000267328"/>
<dbReference type="iPTMnet" id="Q9NX57"/>
<dbReference type="PhosphoSitePlus" id="Q9NX57"/>
<dbReference type="SwissPalm" id="Q9NX57"/>
<dbReference type="BioMuta" id="RAB20"/>
<dbReference type="DMDM" id="20139805"/>
<dbReference type="jPOST" id="Q9NX57"/>
<dbReference type="MassIVE" id="Q9NX57"/>
<dbReference type="PaxDb" id="9606-ENSP00000267328"/>
<dbReference type="PeptideAtlas" id="Q9NX57"/>
<dbReference type="ProteomicsDB" id="83044"/>
<dbReference type="Pumba" id="Q9NX57"/>
<dbReference type="Antibodypedia" id="25565">
    <property type="antibodies" value="279 antibodies from 28 providers"/>
</dbReference>
<dbReference type="DNASU" id="55647"/>
<dbReference type="Ensembl" id="ENST00000267328.5">
    <property type="protein sequence ID" value="ENSP00000267328.3"/>
    <property type="gene ID" value="ENSG00000139832.5"/>
</dbReference>
<dbReference type="GeneID" id="55647"/>
<dbReference type="KEGG" id="hsa:55647"/>
<dbReference type="MANE-Select" id="ENST00000267328.5">
    <property type="protein sequence ID" value="ENSP00000267328.3"/>
    <property type="RefSeq nucleotide sequence ID" value="NM_017817.3"/>
    <property type="RefSeq protein sequence ID" value="NP_060287.1"/>
</dbReference>
<dbReference type="UCSC" id="uc001vqy.4">
    <property type="organism name" value="human"/>
</dbReference>
<dbReference type="AGR" id="HGNC:18260"/>
<dbReference type="CTD" id="55647"/>
<dbReference type="DisGeNET" id="55647"/>
<dbReference type="GeneCards" id="RAB20"/>
<dbReference type="HGNC" id="HGNC:18260">
    <property type="gene designation" value="RAB20"/>
</dbReference>
<dbReference type="HPA" id="ENSG00000139832">
    <property type="expression patterns" value="Low tissue specificity"/>
</dbReference>
<dbReference type="neXtProt" id="NX_Q9NX57"/>
<dbReference type="OpenTargets" id="ENSG00000139832"/>
<dbReference type="PharmGKB" id="PA34110"/>
<dbReference type="VEuPathDB" id="HostDB:ENSG00000139832"/>
<dbReference type="eggNOG" id="KOG0092">
    <property type="taxonomic scope" value="Eukaryota"/>
</dbReference>
<dbReference type="GeneTree" id="ENSGT00940000161024"/>
<dbReference type="HOGENOM" id="CLU_041217_12_0_1"/>
<dbReference type="InParanoid" id="Q9NX57"/>
<dbReference type="OMA" id="DEQDMPA"/>
<dbReference type="OrthoDB" id="9938508at2759"/>
<dbReference type="PAN-GO" id="Q9NX57">
    <property type="GO annotations" value="3 GO annotations based on evolutionary models"/>
</dbReference>
<dbReference type="PhylomeDB" id="Q9NX57"/>
<dbReference type="TreeFam" id="TF331574"/>
<dbReference type="PathwayCommons" id="Q9NX57"/>
<dbReference type="Reactome" id="R-HSA-8873719">
    <property type="pathway name" value="RAB geranylgeranylation"/>
</dbReference>
<dbReference type="BioGRID-ORCS" id="55647">
    <property type="hits" value="14 hits in 1156 CRISPR screens"/>
</dbReference>
<dbReference type="GenomeRNAi" id="55647"/>
<dbReference type="Pharos" id="Q9NX57">
    <property type="development level" value="Tbio"/>
</dbReference>
<dbReference type="PRO" id="PR:Q9NX57"/>
<dbReference type="Proteomes" id="UP000005640">
    <property type="component" value="Chromosome 13"/>
</dbReference>
<dbReference type="RNAct" id="Q9NX57">
    <property type="molecule type" value="protein"/>
</dbReference>
<dbReference type="Bgee" id="ENSG00000139832">
    <property type="expression patterns" value="Expressed in secondary oocyte and 153 other cell types or tissues"/>
</dbReference>
<dbReference type="GO" id="GO:0005769">
    <property type="term" value="C:early endosome"/>
    <property type="evidence" value="ECO:0000318"/>
    <property type="project" value="GO_Central"/>
</dbReference>
<dbReference type="GO" id="GO:0030139">
    <property type="term" value="C:endocytic vesicle"/>
    <property type="evidence" value="ECO:0000318"/>
    <property type="project" value="GO_Central"/>
</dbReference>
<dbReference type="GO" id="GO:0012505">
    <property type="term" value="C:endomembrane system"/>
    <property type="evidence" value="ECO:0000318"/>
    <property type="project" value="GO_Central"/>
</dbReference>
<dbReference type="GO" id="GO:0005794">
    <property type="term" value="C:Golgi apparatus"/>
    <property type="evidence" value="ECO:0000314"/>
    <property type="project" value="HPA"/>
</dbReference>
<dbReference type="GO" id="GO:0043231">
    <property type="term" value="C:intracellular membrane-bounded organelle"/>
    <property type="evidence" value="ECO:0000314"/>
    <property type="project" value="HPA"/>
</dbReference>
<dbReference type="GO" id="GO:0045335">
    <property type="term" value="C:phagocytic vesicle"/>
    <property type="evidence" value="ECO:0000314"/>
    <property type="project" value="UniProtKB"/>
</dbReference>
<dbReference type="GO" id="GO:0030670">
    <property type="term" value="C:phagocytic vesicle membrane"/>
    <property type="evidence" value="ECO:0007669"/>
    <property type="project" value="UniProtKB-SubCell"/>
</dbReference>
<dbReference type="GO" id="GO:0005886">
    <property type="term" value="C:plasma membrane"/>
    <property type="evidence" value="ECO:0000318"/>
    <property type="project" value="GO_Central"/>
</dbReference>
<dbReference type="GO" id="GO:0005525">
    <property type="term" value="F:GTP binding"/>
    <property type="evidence" value="ECO:0007669"/>
    <property type="project" value="UniProtKB-KW"/>
</dbReference>
<dbReference type="GO" id="GO:0003924">
    <property type="term" value="F:GTPase activity"/>
    <property type="evidence" value="ECO:0000318"/>
    <property type="project" value="GO_Central"/>
</dbReference>
<dbReference type="GO" id="GO:0071346">
    <property type="term" value="P:cellular response to type II interferon"/>
    <property type="evidence" value="ECO:0007669"/>
    <property type="project" value="Ensembl"/>
</dbReference>
<dbReference type="GO" id="GO:0006897">
    <property type="term" value="P:endocytosis"/>
    <property type="evidence" value="ECO:0000318"/>
    <property type="project" value="GO_Central"/>
</dbReference>
<dbReference type="GO" id="GO:0006886">
    <property type="term" value="P:intracellular protein transport"/>
    <property type="evidence" value="ECO:0000318"/>
    <property type="project" value="GO_Central"/>
</dbReference>
<dbReference type="GO" id="GO:0090383">
    <property type="term" value="P:phagosome acidification"/>
    <property type="evidence" value="ECO:0000315"/>
    <property type="project" value="UniProtKB"/>
</dbReference>
<dbReference type="GO" id="GO:0090385">
    <property type="term" value="P:phagosome-lysosome fusion"/>
    <property type="evidence" value="ECO:0000315"/>
    <property type="project" value="UniProtKB"/>
</dbReference>
<dbReference type="CDD" id="cd04126">
    <property type="entry name" value="Rab20"/>
    <property type="match status" value="1"/>
</dbReference>
<dbReference type="FunFam" id="3.40.50.300:FF:001257">
    <property type="entry name" value="RAB20, member RAS oncogene family"/>
    <property type="match status" value="1"/>
</dbReference>
<dbReference type="Gene3D" id="3.40.50.300">
    <property type="entry name" value="P-loop containing nucleotide triphosphate hydrolases"/>
    <property type="match status" value="1"/>
</dbReference>
<dbReference type="InterPro" id="IPR027417">
    <property type="entry name" value="P-loop_NTPase"/>
</dbReference>
<dbReference type="InterPro" id="IPR041836">
    <property type="entry name" value="Rab20"/>
</dbReference>
<dbReference type="InterPro" id="IPR005225">
    <property type="entry name" value="Small_GTP-bd"/>
</dbReference>
<dbReference type="InterPro" id="IPR001806">
    <property type="entry name" value="Small_GTPase"/>
</dbReference>
<dbReference type="NCBIfam" id="TIGR00231">
    <property type="entry name" value="small_GTP"/>
    <property type="match status" value="1"/>
</dbReference>
<dbReference type="PANTHER" id="PTHR24073">
    <property type="entry name" value="DRAB5-RELATED"/>
    <property type="match status" value="1"/>
</dbReference>
<dbReference type="Pfam" id="PF00071">
    <property type="entry name" value="Ras"/>
    <property type="match status" value="1"/>
</dbReference>
<dbReference type="PRINTS" id="PR00449">
    <property type="entry name" value="RASTRNSFRMNG"/>
</dbReference>
<dbReference type="SMART" id="SM00175">
    <property type="entry name" value="RAB"/>
    <property type="match status" value="1"/>
</dbReference>
<dbReference type="SMART" id="SM00173">
    <property type="entry name" value="RAS"/>
    <property type="match status" value="1"/>
</dbReference>
<dbReference type="SMART" id="SM00174">
    <property type="entry name" value="RHO"/>
    <property type="match status" value="1"/>
</dbReference>
<dbReference type="SUPFAM" id="SSF52540">
    <property type="entry name" value="P-loop containing nucleoside triphosphate hydrolases"/>
    <property type="match status" value="1"/>
</dbReference>
<dbReference type="PROSITE" id="PS51419">
    <property type="entry name" value="RAB"/>
    <property type="match status" value="1"/>
</dbReference>
<comment type="function">
    <text evidence="3 6">The small GTPases Rab are key regulators of intracellular membrane trafficking, from the formation of transport vesicles to their fusion with membranes. Rabs cycle between an inactive GDP-bound form and an active GTP-bound form that is able to recruit to membranes different sets of downstream effectors directly responsible for vesicle formation, movement, tethering and fusion (By similarity). RAB20 plays a role in apical endocytosis/recycling. Plays a role in the maturation and acidification of phagosomes that engulf pathogens, such as S.aureus and M.tuberculosis. Plays a role in the fusion of phagosomes with lysosomes.</text>
</comment>
<comment type="catalytic activity">
    <reaction evidence="3">
        <text>GTP + H2O = GDP + phosphate + H(+)</text>
        <dbReference type="Rhea" id="RHEA:19669"/>
        <dbReference type="ChEBI" id="CHEBI:15377"/>
        <dbReference type="ChEBI" id="CHEBI:15378"/>
        <dbReference type="ChEBI" id="CHEBI:37565"/>
        <dbReference type="ChEBI" id="CHEBI:43474"/>
        <dbReference type="ChEBI" id="CHEBI:58189"/>
        <dbReference type="EC" id="3.6.5.2"/>
    </reaction>
    <physiologicalReaction direction="left-to-right" evidence="3">
        <dbReference type="Rhea" id="RHEA:19670"/>
    </physiologicalReaction>
</comment>
<comment type="cofactor">
    <cofactor evidence="3">
        <name>Mg(2+)</name>
        <dbReference type="ChEBI" id="CHEBI:18420"/>
    </cofactor>
</comment>
<comment type="activity regulation">
    <text evidence="3">Regulated by guanine nucleotide exchange factors (GEFs) which promote the exchange of bound GDP for free GTP. Regulated by GTPase activating proteins (GAPs) which increase the GTP hydrolysis activity. Inhibited by GDP dissociation inhibitors (GDIs).</text>
</comment>
<comment type="subcellular location">
    <subcellularLocation>
        <location evidence="5">Golgi apparatus</location>
    </subcellularLocation>
    <subcellularLocation>
        <location evidence="6">Cytoplasmic vesicle</location>
        <location evidence="6">Phagosome</location>
    </subcellularLocation>
    <subcellularLocation>
        <location evidence="7">Cytoplasmic vesicle</location>
        <location evidence="7">Phagosome membrane</location>
        <topology evidence="7">Lipid-anchor</topology>
        <orientation evidence="7">Cytoplasmic side</orientation>
    </subcellularLocation>
    <text evidence="2 6">Highly enriched on apical endocytic structures in polarized epithelial cells of kidney proximal tubules (By similarity). Recruited to phagosomes containing S.aureus or M.tuberculosis (PubMed:21255211).</text>
</comment>
<comment type="tissue specificity">
    <text evidence="5">Low or absent expression in normal pancreas and stronger expression in 15 of 18 exocrine pancreatic adenocarcinomas (at protein level).</text>
</comment>
<comment type="domain">
    <text evidence="3">Switch 1, switch 2 and the interswitch regions are characteristic of Rab GTPases and mediate the interactions with Rab downstream effectors. The switch regions undergo conformational changes upon nucleotide binding which drive interaction with specific sets of effector proteins, with most effectors only binding to GTP-bound Rab.</text>
</comment>
<comment type="similarity">
    <text evidence="7">Belongs to the small GTPase superfamily. Rab family.</text>
</comment>
<name>RAB20_HUMAN</name>
<protein>
    <recommendedName>
        <fullName>Ras-related protein Rab-20</fullName>
        <ecNumber evidence="3">3.6.5.2</ecNumber>
    </recommendedName>
</protein>
<evidence type="ECO:0000250" key="1"/>
<evidence type="ECO:0000250" key="2">
    <source>
        <dbReference type="UniProtKB" id="P35295"/>
    </source>
</evidence>
<evidence type="ECO:0000250" key="3">
    <source>
        <dbReference type="UniProtKB" id="P62820"/>
    </source>
</evidence>
<evidence type="ECO:0000256" key="4">
    <source>
        <dbReference type="SAM" id="MobiDB-lite"/>
    </source>
</evidence>
<evidence type="ECO:0000269" key="5">
    <source>
    </source>
</evidence>
<evidence type="ECO:0000269" key="6">
    <source>
    </source>
</evidence>
<evidence type="ECO:0000305" key="7"/>
<evidence type="ECO:0000312" key="8">
    <source>
        <dbReference type="HGNC" id="HGNC:18260"/>
    </source>
</evidence>
<sequence length="234" mass="26277">MRKPDSKIVLLGDMNVGKTSLLQRYMERRFPDTVSTVGGAFYLKQWRSYNISIWDTAGREQFHGLGSMYCRGAAAIILTYDVNHRQSLVELEDRFLGLTDTASKDCLFAIVGNKVDLTEEGALAGQEKEECSPNMDAGDRVSPRAPKQVQLEDAVALYKKILKYKMLDEQDVPAAEQMCFETSAKTGYNVDLLFETLFDLVVPMILQQRAERPSHTVDISSHKPPKRTRSGCCA</sequence>
<keyword id="KW-0968">Cytoplasmic vesicle</keyword>
<keyword id="KW-0333">Golgi apparatus</keyword>
<keyword id="KW-0342">GTP-binding</keyword>
<keyword id="KW-0378">Hydrolase</keyword>
<keyword id="KW-0449">Lipoprotein</keyword>
<keyword id="KW-0460">Magnesium</keyword>
<keyword id="KW-0472">Membrane</keyword>
<keyword id="KW-0479">Metal-binding</keyword>
<keyword id="KW-0547">Nucleotide-binding</keyword>
<keyword id="KW-0636">Prenylation</keyword>
<keyword id="KW-0653">Protein transport</keyword>
<keyword id="KW-1267">Proteomics identification</keyword>
<keyword id="KW-1185">Reference proteome</keyword>
<keyword id="KW-0813">Transport</keyword>
<proteinExistence type="evidence at protein level"/>
<reference key="1">
    <citation type="journal article" date="2006" name="Hum. Pathol.">
        <title>Characterization of human Rab20 overexpressed in exocrine pancreatic carcinoma.</title>
        <authorList>
            <person name="Amillet J.-M."/>
            <person name="Ferbus D."/>
            <person name="Real F.X."/>
            <person name="Antony C."/>
            <person name="Muleris M."/>
            <person name="Gress T.M."/>
            <person name="Goubin G."/>
        </authorList>
    </citation>
    <scope>NUCLEOTIDE SEQUENCE [MRNA]</scope>
    <scope>SUBCELLULAR LOCATION</scope>
    <scope>TISSUE SPECIFICITY</scope>
</reference>
<reference key="2">
    <citation type="journal article" date="2004" name="Nat. Genet.">
        <title>Complete sequencing and characterization of 21,243 full-length human cDNAs.</title>
        <authorList>
            <person name="Ota T."/>
            <person name="Suzuki Y."/>
            <person name="Nishikawa T."/>
            <person name="Otsuki T."/>
            <person name="Sugiyama T."/>
            <person name="Irie R."/>
            <person name="Wakamatsu A."/>
            <person name="Hayashi K."/>
            <person name="Sato H."/>
            <person name="Nagai K."/>
            <person name="Kimura K."/>
            <person name="Makita H."/>
            <person name="Sekine M."/>
            <person name="Obayashi M."/>
            <person name="Nishi T."/>
            <person name="Shibahara T."/>
            <person name="Tanaka T."/>
            <person name="Ishii S."/>
            <person name="Yamamoto J."/>
            <person name="Saito K."/>
            <person name="Kawai Y."/>
            <person name="Isono Y."/>
            <person name="Nakamura Y."/>
            <person name="Nagahari K."/>
            <person name="Murakami K."/>
            <person name="Yasuda T."/>
            <person name="Iwayanagi T."/>
            <person name="Wagatsuma M."/>
            <person name="Shiratori A."/>
            <person name="Sudo H."/>
            <person name="Hosoiri T."/>
            <person name="Kaku Y."/>
            <person name="Kodaira H."/>
            <person name="Kondo H."/>
            <person name="Sugawara M."/>
            <person name="Takahashi M."/>
            <person name="Kanda K."/>
            <person name="Yokoi T."/>
            <person name="Furuya T."/>
            <person name="Kikkawa E."/>
            <person name="Omura Y."/>
            <person name="Abe K."/>
            <person name="Kamihara K."/>
            <person name="Katsuta N."/>
            <person name="Sato K."/>
            <person name="Tanikawa M."/>
            <person name="Yamazaki M."/>
            <person name="Ninomiya K."/>
            <person name="Ishibashi T."/>
            <person name="Yamashita H."/>
            <person name="Murakawa K."/>
            <person name="Fujimori K."/>
            <person name="Tanai H."/>
            <person name="Kimata M."/>
            <person name="Watanabe M."/>
            <person name="Hiraoka S."/>
            <person name="Chiba Y."/>
            <person name="Ishida S."/>
            <person name="Ono Y."/>
            <person name="Takiguchi S."/>
            <person name="Watanabe S."/>
            <person name="Yosida M."/>
            <person name="Hotuta T."/>
            <person name="Kusano J."/>
            <person name="Kanehori K."/>
            <person name="Takahashi-Fujii A."/>
            <person name="Hara H."/>
            <person name="Tanase T.-O."/>
            <person name="Nomura Y."/>
            <person name="Togiya S."/>
            <person name="Komai F."/>
            <person name="Hara R."/>
            <person name="Takeuchi K."/>
            <person name="Arita M."/>
            <person name="Imose N."/>
            <person name="Musashino K."/>
            <person name="Yuuki H."/>
            <person name="Oshima A."/>
            <person name="Sasaki N."/>
            <person name="Aotsuka S."/>
            <person name="Yoshikawa Y."/>
            <person name="Matsunawa H."/>
            <person name="Ichihara T."/>
            <person name="Shiohata N."/>
            <person name="Sano S."/>
            <person name="Moriya S."/>
            <person name="Momiyama H."/>
            <person name="Satoh N."/>
            <person name="Takami S."/>
            <person name="Terashima Y."/>
            <person name="Suzuki O."/>
            <person name="Nakagawa S."/>
            <person name="Senoh A."/>
            <person name="Mizoguchi H."/>
            <person name="Goto Y."/>
            <person name="Shimizu F."/>
            <person name="Wakebe H."/>
            <person name="Hishigaki H."/>
            <person name="Watanabe T."/>
            <person name="Sugiyama A."/>
            <person name="Takemoto M."/>
            <person name="Kawakami B."/>
            <person name="Yamazaki M."/>
            <person name="Watanabe K."/>
            <person name="Kumagai A."/>
            <person name="Itakura S."/>
            <person name="Fukuzumi Y."/>
            <person name="Fujimori Y."/>
            <person name="Komiyama M."/>
            <person name="Tashiro H."/>
            <person name="Tanigami A."/>
            <person name="Fujiwara T."/>
            <person name="Ono T."/>
            <person name="Yamada K."/>
            <person name="Fujii Y."/>
            <person name="Ozaki K."/>
            <person name="Hirao M."/>
            <person name="Ohmori Y."/>
            <person name="Kawabata A."/>
            <person name="Hikiji T."/>
            <person name="Kobatake N."/>
            <person name="Inagaki H."/>
            <person name="Ikema Y."/>
            <person name="Okamoto S."/>
            <person name="Okitani R."/>
            <person name="Kawakami T."/>
            <person name="Noguchi S."/>
            <person name="Itoh T."/>
            <person name="Shigeta K."/>
            <person name="Senba T."/>
            <person name="Matsumura K."/>
            <person name="Nakajima Y."/>
            <person name="Mizuno T."/>
            <person name="Morinaga M."/>
            <person name="Sasaki M."/>
            <person name="Togashi T."/>
            <person name="Oyama M."/>
            <person name="Hata H."/>
            <person name="Watanabe M."/>
            <person name="Komatsu T."/>
            <person name="Mizushima-Sugano J."/>
            <person name="Satoh T."/>
            <person name="Shirai Y."/>
            <person name="Takahashi Y."/>
            <person name="Nakagawa K."/>
            <person name="Okumura K."/>
            <person name="Nagase T."/>
            <person name="Nomura N."/>
            <person name="Kikuchi H."/>
            <person name="Masuho Y."/>
            <person name="Yamashita R."/>
            <person name="Nakai K."/>
            <person name="Yada T."/>
            <person name="Nakamura Y."/>
            <person name="Ohara O."/>
            <person name="Isogai T."/>
            <person name="Sugano S."/>
        </authorList>
    </citation>
    <scope>NUCLEOTIDE SEQUENCE [LARGE SCALE MRNA]</scope>
</reference>
<reference key="3">
    <citation type="journal article" date="2004" name="Nature">
        <title>The DNA sequence and analysis of human chromosome 13.</title>
        <authorList>
            <person name="Dunham A."/>
            <person name="Matthews L.H."/>
            <person name="Burton J."/>
            <person name="Ashurst J.L."/>
            <person name="Howe K.L."/>
            <person name="Ashcroft K.J."/>
            <person name="Beare D.M."/>
            <person name="Burford D.C."/>
            <person name="Hunt S.E."/>
            <person name="Griffiths-Jones S."/>
            <person name="Jones M.C."/>
            <person name="Keenan S.J."/>
            <person name="Oliver K."/>
            <person name="Scott C.E."/>
            <person name="Ainscough R."/>
            <person name="Almeida J.P."/>
            <person name="Ambrose K.D."/>
            <person name="Andrews D.T."/>
            <person name="Ashwell R.I.S."/>
            <person name="Babbage A.K."/>
            <person name="Bagguley C.L."/>
            <person name="Bailey J."/>
            <person name="Bannerjee R."/>
            <person name="Barlow K.F."/>
            <person name="Bates K."/>
            <person name="Beasley H."/>
            <person name="Bird C.P."/>
            <person name="Bray-Allen S."/>
            <person name="Brown A.J."/>
            <person name="Brown J.Y."/>
            <person name="Burrill W."/>
            <person name="Carder C."/>
            <person name="Carter N.P."/>
            <person name="Chapman J.C."/>
            <person name="Clamp M.E."/>
            <person name="Clark S.Y."/>
            <person name="Clarke G."/>
            <person name="Clee C.M."/>
            <person name="Clegg S.C."/>
            <person name="Cobley V."/>
            <person name="Collins J.E."/>
            <person name="Corby N."/>
            <person name="Coville G.J."/>
            <person name="Deloukas P."/>
            <person name="Dhami P."/>
            <person name="Dunham I."/>
            <person name="Dunn M."/>
            <person name="Earthrowl M.E."/>
            <person name="Ellington A.G."/>
            <person name="Faulkner L."/>
            <person name="Frankish A.G."/>
            <person name="Frankland J."/>
            <person name="French L."/>
            <person name="Garner P."/>
            <person name="Garnett J."/>
            <person name="Gilbert J.G.R."/>
            <person name="Gilson C.J."/>
            <person name="Ghori J."/>
            <person name="Grafham D.V."/>
            <person name="Gribble S.M."/>
            <person name="Griffiths C."/>
            <person name="Hall R.E."/>
            <person name="Hammond S."/>
            <person name="Harley J.L."/>
            <person name="Hart E.A."/>
            <person name="Heath P.D."/>
            <person name="Howden P.J."/>
            <person name="Huckle E.J."/>
            <person name="Hunt P.J."/>
            <person name="Hunt A.R."/>
            <person name="Johnson C."/>
            <person name="Johnson D."/>
            <person name="Kay M."/>
            <person name="Kimberley A.M."/>
            <person name="King A."/>
            <person name="Laird G.K."/>
            <person name="Langford C.J."/>
            <person name="Lawlor S."/>
            <person name="Leongamornlert D.A."/>
            <person name="Lloyd D.M."/>
            <person name="Lloyd C."/>
            <person name="Loveland J.E."/>
            <person name="Lovell J."/>
            <person name="Martin S."/>
            <person name="Mashreghi-Mohammadi M."/>
            <person name="McLaren S.J."/>
            <person name="McMurray A."/>
            <person name="Milne S."/>
            <person name="Moore M.J.F."/>
            <person name="Nickerson T."/>
            <person name="Palmer S.A."/>
            <person name="Pearce A.V."/>
            <person name="Peck A.I."/>
            <person name="Pelan S."/>
            <person name="Phillimore B."/>
            <person name="Porter K.M."/>
            <person name="Rice C.M."/>
            <person name="Searle S."/>
            <person name="Sehra H.K."/>
            <person name="Shownkeen R."/>
            <person name="Skuce C.D."/>
            <person name="Smith M."/>
            <person name="Steward C.A."/>
            <person name="Sycamore N."/>
            <person name="Tester J."/>
            <person name="Thomas D.W."/>
            <person name="Tracey A."/>
            <person name="Tromans A."/>
            <person name="Tubby B."/>
            <person name="Wall M."/>
            <person name="Wallis J.M."/>
            <person name="West A.P."/>
            <person name="Whitehead S.L."/>
            <person name="Willey D.L."/>
            <person name="Wilming L."/>
            <person name="Wray P.W."/>
            <person name="Wright M.W."/>
            <person name="Young L."/>
            <person name="Coulson A."/>
            <person name="Durbin R.M."/>
            <person name="Hubbard T."/>
            <person name="Sulston J.E."/>
            <person name="Beck S."/>
            <person name="Bentley D.R."/>
            <person name="Rogers J."/>
            <person name="Ross M.T."/>
        </authorList>
    </citation>
    <scope>NUCLEOTIDE SEQUENCE [LARGE SCALE GENOMIC DNA]</scope>
</reference>
<reference key="4">
    <citation type="submission" date="2005-07" db="EMBL/GenBank/DDBJ databases">
        <authorList>
            <person name="Mural R.J."/>
            <person name="Istrail S."/>
            <person name="Sutton G.G."/>
            <person name="Florea L."/>
            <person name="Halpern A.L."/>
            <person name="Mobarry C.M."/>
            <person name="Lippert R."/>
            <person name="Walenz B."/>
            <person name="Shatkay H."/>
            <person name="Dew I."/>
            <person name="Miller J.R."/>
            <person name="Flanigan M.J."/>
            <person name="Edwards N.J."/>
            <person name="Bolanos R."/>
            <person name="Fasulo D."/>
            <person name="Halldorsson B.V."/>
            <person name="Hannenhalli S."/>
            <person name="Turner R."/>
            <person name="Yooseph S."/>
            <person name="Lu F."/>
            <person name="Nusskern D.R."/>
            <person name="Shue B.C."/>
            <person name="Zheng X.H."/>
            <person name="Zhong F."/>
            <person name="Delcher A.L."/>
            <person name="Huson D.H."/>
            <person name="Kravitz S.A."/>
            <person name="Mouchard L."/>
            <person name="Reinert K."/>
            <person name="Remington K.A."/>
            <person name="Clark A.G."/>
            <person name="Waterman M.S."/>
            <person name="Eichler E.E."/>
            <person name="Adams M.D."/>
            <person name="Hunkapiller M.W."/>
            <person name="Myers E.W."/>
            <person name="Venter J.C."/>
        </authorList>
    </citation>
    <scope>NUCLEOTIDE SEQUENCE [LARGE SCALE GENOMIC DNA]</scope>
</reference>
<reference key="5">
    <citation type="journal article" date="2004" name="Genome Res.">
        <title>The status, quality, and expansion of the NIH full-length cDNA project: the Mammalian Gene Collection (MGC).</title>
        <authorList>
            <consortium name="The MGC Project Team"/>
        </authorList>
    </citation>
    <scope>NUCLEOTIDE SEQUENCE [LARGE SCALE MRNA]</scope>
    <source>
        <tissue>Lung</tissue>
    </source>
</reference>
<reference key="6">
    <citation type="journal article" date="2011" name="Traffic">
        <title>Rab GTPases regulating phagosome maturation are differentially recruited to mycobacterial phagosomes.</title>
        <authorList>
            <person name="Seto S."/>
            <person name="Tsujimura K."/>
            <person name="Koide Y."/>
        </authorList>
    </citation>
    <scope>FUNCTION</scope>
    <scope>SUBCELLULAR LOCATION</scope>
</reference>
<feature type="chain" id="PRO_0000121202" description="Ras-related protein Rab-20">
    <location>
        <begin position="1"/>
        <end position="234"/>
    </location>
</feature>
<feature type="region of interest" description="Disordered" evidence="4">
    <location>
        <begin position="125"/>
        <end position="144"/>
    </location>
</feature>
<feature type="region of interest" description="Disordered" evidence="4">
    <location>
        <begin position="212"/>
        <end position="234"/>
    </location>
</feature>
<feature type="short sequence motif" description="Switch 1" evidence="3">
    <location>
        <begin position="28"/>
        <end position="41"/>
    </location>
</feature>
<feature type="short sequence motif" description="Switch 2" evidence="3">
    <location>
        <begin position="55"/>
        <end position="72"/>
    </location>
</feature>
<feature type="compositionally biased region" description="Basic and acidic residues" evidence="4">
    <location>
        <begin position="126"/>
        <end position="142"/>
    </location>
</feature>
<feature type="compositionally biased region" description="Basic residues" evidence="4">
    <location>
        <begin position="223"/>
        <end position="234"/>
    </location>
</feature>
<feature type="binding site" evidence="3">
    <location>
        <position position="17"/>
    </location>
    <ligand>
        <name>GTP</name>
        <dbReference type="ChEBI" id="CHEBI:37565"/>
    </ligand>
</feature>
<feature type="binding site" evidence="3">
    <location>
        <position position="18"/>
    </location>
    <ligand>
        <name>GTP</name>
        <dbReference type="ChEBI" id="CHEBI:37565"/>
    </ligand>
</feature>
<feature type="binding site" evidence="3">
    <location>
        <position position="19"/>
    </location>
    <ligand>
        <name>GTP</name>
        <dbReference type="ChEBI" id="CHEBI:37565"/>
    </ligand>
</feature>
<feature type="binding site" evidence="3">
    <location>
        <position position="19"/>
    </location>
    <ligand>
        <name>Mg(2+)</name>
        <dbReference type="ChEBI" id="CHEBI:18420"/>
    </ligand>
</feature>
<feature type="binding site" evidence="3">
    <location>
        <position position="32"/>
    </location>
    <ligand>
        <name>GTP</name>
        <dbReference type="ChEBI" id="CHEBI:37565"/>
    </ligand>
</feature>
<feature type="binding site" evidence="3">
    <location>
        <position position="36"/>
    </location>
    <ligand>
        <name>GTP</name>
        <dbReference type="ChEBI" id="CHEBI:37565"/>
    </ligand>
</feature>
<feature type="binding site" evidence="3">
    <location>
        <position position="36"/>
    </location>
    <ligand>
        <name>Mg(2+)</name>
        <dbReference type="ChEBI" id="CHEBI:18420"/>
    </ligand>
</feature>
<feature type="binding site" evidence="3">
    <location>
        <position position="55"/>
    </location>
    <ligand>
        <name>Mg(2+)</name>
        <dbReference type="ChEBI" id="CHEBI:18420"/>
    </ligand>
</feature>
<feature type="binding site" evidence="3">
    <location>
        <position position="58"/>
    </location>
    <ligand>
        <name>GTP</name>
        <dbReference type="ChEBI" id="CHEBI:37565"/>
    </ligand>
</feature>
<feature type="binding site" evidence="3">
    <location>
        <position position="113"/>
    </location>
    <ligand>
        <name>GTP</name>
        <dbReference type="ChEBI" id="CHEBI:37565"/>
    </ligand>
</feature>
<feature type="binding site" evidence="3">
    <location>
        <position position="114"/>
    </location>
    <ligand>
        <name>GTP</name>
        <dbReference type="ChEBI" id="CHEBI:37565"/>
    </ligand>
</feature>
<feature type="binding site" evidence="3">
    <location>
        <position position="116"/>
    </location>
    <ligand>
        <name>GTP</name>
        <dbReference type="ChEBI" id="CHEBI:37565"/>
    </ligand>
</feature>
<feature type="binding site" evidence="3">
    <location>
        <position position="184"/>
    </location>
    <ligand>
        <name>GTP</name>
        <dbReference type="ChEBI" id="CHEBI:37565"/>
    </ligand>
</feature>
<feature type="binding site" evidence="3">
    <location>
        <position position="185"/>
    </location>
    <ligand>
        <name>GTP</name>
        <dbReference type="ChEBI" id="CHEBI:37565"/>
    </ligand>
</feature>
<feature type="lipid moiety-binding region" description="S-geranylgeranyl cysteine" evidence="1">
    <location>
        <position position="232"/>
    </location>
</feature>
<feature type="lipid moiety-binding region" description="S-geranylgeranyl cysteine" evidence="1">
    <location>
        <position position="233"/>
    </location>
</feature>
<feature type="sequence variant" id="VAR_017158" description="In dbSNP:rs426453.">
    <original>N</original>
    <variation>S</variation>
    <location>
        <position position="134"/>
    </location>
</feature>
<feature type="sequence conflict" description="In Ref. 2; BAA91171." evidence="7" ref="2">
    <original>F</original>
    <variation>I</variation>
    <location>
        <position position="62"/>
    </location>
</feature>
<organism>
    <name type="scientific">Homo sapiens</name>
    <name type="common">Human</name>
    <dbReference type="NCBI Taxonomy" id="9606"/>
    <lineage>
        <taxon>Eukaryota</taxon>
        <taxon>Metazoa</taxon>
        <taxon>Chordata</taxon>
        <taxon>Craniata</taxon>
        <taxon>Vertebrata</taxon>
        <taxon>Euteleostomi</taxon>
        <taxon>Mammalia</taxon>
        <taxon>Eutheria</taxon>
        <taxon>Euarchontoglires</taxon>
        <taxon>Primates</taxon>
        <taxon>Haplorrhini</taxon>
        <taxon>Catarrhini</taxon>
        <taxon>Hominidae</taxon>
        <taxon>Homo</taxon>
    </lineage>
</organism>
<gene>
    <name evidence="8" type="primary">RAB20</name>
</gene>